<reference key="1">
    <citation type="journal article" date="2005" name="Proc. Natl. Acad. Sci. U.S.A.">
        <title>The psychrophilic lifestyle as revealed by the genome sequence of Colwellia psychrerythraea 34H through genomic and proteomic analyses.</title>
        <authorList>
            <person name="Methe B.A."/>
            <person name="Nelson K.E."/>
            <person name="Deming J.W."/>
            <person name="Momen B."/>
            <person name="Melamud E."/>
            <person name="Zhang X."/>
            <person name="Moult J."/>
            <person name="Madupu R."/>
            <person name="Nelson W.C."/>
            <person name="Dodson R.J."/>
            <person name="Brinkac L.M."/>
            <person name="Daugherty S.C."/>
            <person name="Durkin A.S."/>
            <person name="DeBoy R.T."/>
            <person name="Kolonay J.F."/>
            <person name="Sullivan S.A."/>
            <person name="Zhou L."/>
            <person name="Davidsen T.M."/>
            <person name="Wu M."/>
            <person name="Huston A.L."/>
            <person name="Lewis M."/>
            <person name="Weaver B."/>
            <person name="Weidman J.F."/>
            <person name="Khouri H."/>
            <person name="Utterback T.R."/>
            <person name="Feldblyum T.V."/>
            <person name="Fraser C.M."/>
        </authorList>
    </citation>
    <scope>NUCLEOTIDE SEQUENCE [LARGE SCALE GENOMIC DNA]</scope>
    <source>
        <strain>34H / ATCC BAA-681</strain>
    </source>
</reference>
<gene>
    <name type="ordered locus">CPS_3517</name>
</gene>
<name>Y3517_COLP3</name>
<protein>
    <recommendedName>
        <fullName evidence="1">YcgL domain-containing protein CPS_3517</fullName>
    </recommendedName>
</protein>
<organism>
    <name type="scientific">Colwellia psychrerythraea (strain 34H / ATCC BAA-681)</name>
    <name type="common">Vibrio psychroerythus</name>
    <dbReference type="NCBI Taxonomy" id="167879"/>
    <lineage>
        <taxon>Bacteria</taxon>
        <taxon>Pseudomonadati</taxon>
        <taxon>Pseudomonadota</taxon>
        <taxon>Gammaproteobacteria</taxon>
        <taxon>Alteromonadales</taxon>
        <taxon>Colwelliaceae</taxon>
        <taxon>Colwellia</taxon>
    </lineage>
</organism>
<accession>Q47YC9</accession>
<feature type="chain" id="PRO_0000375284" description="YcgL domain-containing protein CPS_3517">
    <location>
        <begin position="1"/>
        <end position="97"/>
    </location>
</feature>
<feature type="domain" description="YcgL" evidence="1">
    <location>
        <begin position="1"/>
        <end position="85"/>
    </location>
</feature>
<sequence length="97" mass="10929">MLCAIYKSARKAQTYLFVNKRDDFSSVPEGLMKTFGTPNLVTLINLATKDKLAMADLEKVKKNLIEKGFYLQLPPPQEDLLKEHKAAMAAEKEQGEL</sequence>
<proteinExistence type="inferred from homology"/>
<dbReference type="EMBL" id="CP000083">
    <property type="protein sequence ID" value="AAZ25145.1"/>
    <property type="molecule type" value="Genomic_DNA"/>
</dbReference>
<dbReference type="RefSeq" id="WP_011044277.1">
    <property type="nucleotide sequence ID" value="NC_003910.7"/>
</dbReference>
<dbReference type="SMR" id="Q47YC9"/>
<dbReference type="STRING" id="167879.CPS_3517"/>
<dbReference type="KEGG" id="cps:CPS_3517"/>
<dbReference type="HOGENOM" id="CLU_155118_1_0_6"/>
<dbReference type="Proteomes" id="UP000000547">
    <property type="component" value="Chromosome"/>
</dbReference>
<dbReference type="Gene3D" id="3.10.510.20">
    <property type="entry name" value="YcgL domain"/>
    <property type="match status" value="1"/>
</dbReference>
<dbReference type="HAMAP" id="MF_01866">
    <property type="entry name" value="UPF0745"/>
    <property type="match status" value="1"/>
</dbReference>
<dbReference type="InterPro" id="IPR038068">
    <property type="entry name" value="YcgL-like_sf"/>
</dbReference>
<dbReference type="InterPro" id="IPR027354">
    <property type="entry name" value="YcgL_dom"/>
</dbReference>
<dbReference type="PANTHER" id="PTHR38109">
    <property type="entry name" value="PROTEIN YCGL"/>
    <property type="match status" value="1"/>
</dbReference>
<dbReference type="PANTHER" id="PTHR38109:SF1">
    <property type="entry name" value="PROTEIN YCGL"/>
    <property type="match status" value="1"/>
</dbReference>
<dbReference type="Pfam" id="PF05166">
    <property type="entry name" value="YcgL"/>
    <property type="match status" value="1"/>
</dbReference>
<dbReference type="SUPFAM" id="SSF160191">
    <property type="entry name" value="YcgL-like"/>
    <property type="match status" value="1"/>
</dbReference>
<dbReference type="PROSITE" id="PS51648">
    <property type="entry name" value="YCGL"/>
    <property type="match status" value="1"/>
</dbReference>
<evidence type="ECO:0000255" key="1">
    <source>
        <dbReference type="HAMAP-Rule" id="MF_01866"/>
    </source>
</evidence>